<feature type="chain" id="PRO_0000229969" description="Tetraacyldisaccharide 4'-kinase">
    <location>
        <begin position="1"/>
        <end position="336"/>
    </location>
</feature>
<feature type="binding site" evidence="1">
    <location>
        <begin position="60"/>
        <end position="67"/>
    </location>
    <ligand>
        <name>ATP</name>
        <dbReference type="ChEBI" id="CHEBI:30616"/>
    </ligand>
</feature>
<evidence type="ECO:0000255" key="1">
    <source>
        <dbReference type="HAMAP-Rule" id="MF_00409"/>
    </source>
</evidence>
<accession>Q4KFT5</accession>
<protein>
    <recommendedName>
        <fullName evidence="1">Tetraacyldisaccharide 4'-kinase</fullName>
        <ecNumber evidence="1">2.7.1.130</ecNumber>
    </recommendedName>
    <alternativeName>
        <fullName evidence="1">Lipid A 4'-kinase</fullName>
    </alternativeName>
</protein>
<gene>
    <name evidence="1" type="primary">lpxK</name>
    <name type="ordered locus">PFL_1778</name>
</gene>
<comment type="function">
    <text evidence="1">Transfers the gamma-phosphate of ATP to the 4'-position of a tetraacyldisaccharide 1-phosphate intermediate (termed DS-1-P) to form tetraacyldisaccharide 1,4'-bis-phosphate (lipid IVA).</text>
</comment>
<comment type="catalytic activity">
    <reaction evidence="1">
        <text>a lipid A disaccharide + ATP = a lipid IVA + ADP + H(+)</text>
        <dbReference type="Rhea" id="RHEA:67840"/>
        <dbReference type="ChEBI" id="CHEBI:15378"/>
        <dbReference type="ChEBI" id="CHEBI:30616"/>
        <dbReference type="ChEBI" id="CHEBI:176343"/>
        <dbReference type="ChEBI" id="CHEBI:176425"/>
        <dbReference type="ChEBI" id="CHEBI:456216"/>
        <dbReference type="EC" id="2.7.1.130"/>
    </reaction>
</comment>
<comment type="pathway">
    <text evidence="1">Glycolipid biosynthesis; lipid IV(A) biosynthesis; lipid IV(A) from (3R)-3-hydroxytetradecanoyl-[acyl-carrier-protein] and UDP-N-acetyl-alpha-D-glucosamine: step 6/6.</text>
</comment>
<comment type="similarity">
    <text evidence="1">Belongs to the LpxK family.</text>
</comment>
<organism>
    <name type="scientific">Pseudomonas fluorescens (strain ATCC BAA-477 / NRRL B-23932 / Pf-5)</name>
    <dbReference type="NCBI Taxonomy" id="220664"/>
    <lineage>
        <taxon>Bacteria</taxon>
        <taxon>Pseudomonadati</taxon>
        <taxon>Pseudomonadota</taxon>
        <taxon>Gammaproteobacteria</taxon>
        <taxon>Pseudomonadales</taxon>
        <taxon>Pseudomonadaceae</taxon>
        <taxon>Pseudomonas</taxon>
    </lineage>
</organism>
<keyword id="KW-0067">ATP-binding</keyword>
<keyword id="KW-0418">Kinase</keyword>
<keyword id="KW-0441">Lipid A biosynthesis</keyword>
<keyword id="KW-0444">Lipid biosynthesis</keyword>
<keyword id="KW-0443">Lipid metabolism</keyword>
<keyword id="KW-0547">Nucleotide-binding</keyword>
<keyword id="KW-0808">Transferase</keyword>
<sequence>MALSDRLLNAWYNGHPALKLLRPLECLYRRVVTGKRQRFLAGEGAIYQPPVPLIVVGNITVGGTGKTPLILWLVEHCQRLGLRVGVVSRGYGAKPAQLPWRVSAEDCAAVAGDEPLLIVQRCGVPLMIDPDRGRAVQALLAAEPLDLILSDDGLQHYRLARDLELVLIDAARGLGNRRCLPAGPLREPAERLQSVDAVLYNGAVDDRDDGFAFHLKPSVLVNLRSGERRALEHFAPGQALHAVAGIGNPQRFFNTLETLHWRPVPHAFADHAQYSAQALTFTPSLPLVMTEKDAVKCRAFAADDWWYLAVDAQPSPAFVAWFDTQLMRLLPDRLLP</sequence>
<proteinExistence type="inferred from homology"/>
<dbReference type="EC" id="2.7.1.130" evidence="1"/>
<dbReference type="EMBL" id="CP000076">
    <property type="protein sequence ID" value="AAY91067.1"/>
    <property type="molecule type" value="Genomic_DNA"/>
</dbReference>
<dbReference type="RefSeq" id="WP_011060102.1">
    <property type="nucleotide sequence ID" value="NC_004129.6"/>
</dbReference>
<dbReference type="SMR" id="Q4KFT5"/>
<dbReference type="STRING" id="220664.PFL_1778"/>
<dbReference type="KEGG" id="pfl:PFL_1778"/>
<dbReference type="PATRIC" id="fig|220664.5.peg.1812"/>
<dbReference type="eggNOG" id="COG1663">
    <property type="taxonomic scope" value="Bacteria"/>
</dbReference>
<dbReference type="HOGENOM" id="CLU_038816_2_0_6"/>
<dbReference type="UniPathway" id="UPA00359">
    <property type="reaction ID" value="UER00482"/>
</dbReference>
<dbReference type="Proteomes" id="UP000008540">
    <property type="component" value="Chromosome"/>
</dbReference>
<dbReference type="GO" id="GO:0005886">
    <property type="term" value="C:plasma membrane"/>
    <property type="evidence" value="ECO:0007669"/>
    <property type="project" value="TreeGrafter"/>
</dbReference>
<dbReference type="GO" id="GO:0005524">
    <property type="term" value="F:ATP binding"/>
    <property type="evidence" value="ECO:0007669"/>
    <property type="project" value="UniProtKB-UniRule"/>
</dbReference>
<dbReference type="GO" id="GO:0009029">
    <property type="term" value="F:tetraacyldisaccharide 4'-kinase activity"/>
    <property type="evidence" value="ECO:0007669"/>
    <property type="project" value="UniProtKB-UniRule"/>
</dbReference>
<dbReference type="GO" id="GO:0009245">
    <property type="term" value="P:lipid A biosynthetic process"/>
    <property type="evidence" value="ECO:0007669"/>
    <property type="project" value="UniProtKB-UniRule"/>
</dbReference>
<dbReference type="GO" id="GO:0009244">
    <property type="term" value="P:lipopolysaccharide core region biosynthetic process"/>
    <property type="evidence" value="ECO:0007669"/>
    <property type="project" value="TreeGrafter"/>
</dbReference>
<dbReference type="HAMAP" id="MF_00409">
    <property type="entry name" value="LpxK"/>
    <property type="match status" value="1"/>
</dbReference>
<dbReference type="InterPro" id="IPR003758">
    <property type="entry name" value="LpxK"/>
</dbReference>
<dbReference type="InterPro" id="IPR027417">
    <property type="entry name" value="P-loop_NTPase"/>
</dbReference>
<dbReference type="NCBIfam" id="TIGR00682">
    <property type="entry name" value="lpxK"/>
    <property type="match status" value="1"/>
</dbReference>
<dbReference type="PANTHER" id="PTHR42724">
    <property type="entry name" value="TETRAACYLDISACCHARIDE 4'-KINASE"/>
    <property type="match status" value="1"/>
</dbReference>
<dbReference type="PANTHER" id="PTHR42724:SF1">
    <property type="entry name" value="TETRAACYLDISACCHARIDE 4'-KINASE, MITOCHONDRIAL-RELATED"/>
    <property type="match status" value="1"/>
</dbReference>
<dbReference type="Pfam" id="PF02606">
    <property type="entry name" value="LpxK"/>
    <property type="match status" value="1"/>
</dbReference>
<dbReference type="SUPFAM" id="SSF52540">
    <property type="entry name" value="P-loop containing nucleoside triphosphate hydrolases"/>
    <property type="match status" value="1"/>
</dbReference>
<reference key="1">
    <citation type="journal article" date="2005" name="Nat. Biotechnol.">
        <title>Complete genome sequence of the plant commensal Pseudomonas fluorescens Pf-5.</title>
        <authorList>
            <person name="Paulsen I.T."/>
            <person name="Press C.M."/>
            <person name="Ravel J."/>
            <person name="Kobayashi D.Y."/>
            <person name="Myers G.S.A."/>
            <person name="Mavrodi D.V."/>
            <person name="DeBoy R.T."/>
            <person name="Seshadri R."/>
            <person name="Ren Q."/>
            <person name="Madupu R."/>
            <person name="Dodson R.J."/>
            <person name="Durkin A.S."/>
            <person name="Brinkac L.M."/>
            <person name="Daugherty S.C."/>
            <person name="Sullivan S.A."/>
            <person name="Rosovitz M.J."/>
            <person name="Gwinn M.L."/>
            <person name="Zhou L."/>
            <person name="Schneider D.J."/>
            <person name="Cartinhour S.W."/>
            <person name="Nelson W.C."/>
            <person name="Weidman J."/>
            <person name="Watkins K."/>
            <person name="Tran K."/>
            <person name="Khouri H."/>
            <person name="Pierson E.A."/>
            <person name="Pierson L.S. III"/>
            <person name="Thomashow L.S."/>
            <person name="Loper J.E."/>
        </authorList>
    </citation>
    <scope>NUCLEOTIDE SEQUENCE [LARGE SCALE GENOMIC DNA]</scope>
    <source>
        <strain>ATCC BAA-477 / NRRL B-23932 / Pf-5</strain>
    </source>
</reference>
<name>LPXK_PSEF5</name>